<protein>
    <recommendedName>
        <fullName evidence="12 13">Interferon beta</fullName>
        <shortName evidence="12">IFN-beta</shortName>
    </recommendedName>
</protein>
<name>IFNB_MOUSE</name>
<accession>P01575</accession>
<comment type="function">
    <text evidence="1 4 6 8 9">Type I interferon cytokine that plays a key role in the innate immune response to infection, developing tumors and other inflammatory stimuli (PubMed:10708458, PubMed:23872679). Signals via binding to high-affinity (IFNAR2) and low-affinity (IFNAR1) heterodimeric receptor, activating the canonical Jak-STAT signaling pathway resulting in transcriptional activation or repression of interferon-regulated genes that encode the effectors of the interferon response, such as antiviral proteins, regulators of cell proliferation and differentiation, and immunoregulatory proteins (By similarity). Signals mostly via binding to a IFNAR1-IFNAR2 heterodimeric receptor, but can also function with IFNAR1 alone and independently of Jak-STAT pathways (PubMed:23872679). Elicits a wide variety of responses, including antiviral and antibacterial activities, and can regulate the development of B-cells, myelopoiesis and lipopolysaccharide (LPS)-inducible production of tumor necrosis factor (PubMed:10708458, PubMed:14597717). Plays a role in neuronal homeostasis by regulating dopamine turnover and protecting dopaminergic neurons: acts by promoting neuronal autophagy and alpha-synuclein clearance, thereby preventing dopaminergic neuron loss (PubMed:26451483). IFNB1 is more potent than interferon-alpha (IFN-alpha) in inducing the apoptotic and antiproliferative pathways required for control of tumor cell growth (PubMed:14597717).</text>
</comment>
<comment type="subunit">
    <text evidence="8">Monomer.</text>
</comment>
<comment type="subcellular location">
    <subcellularLocation>
        <location evidence="1">Secreted</location>
    </subcellularLocation>
</comment>
<comment type="PTM">
    <text evidence="7">This beta interferon does not have a disulfide bond.</text>
</comment>
<comment type="disruption phenotype">
    <text evidence="4 5 6 9">Mice show impaired antiviral activity and are highly susceptible to vaccinia virus infection (PubMed:10708458). Mice show spontaneous neurodegeneration: mice display motor and cognitive learning impairments associated with alpha-synuclein-containing Lewy bodies in the brain, as well as a reduction in dopaminergic neurons and defective dopamine signaling in the nigrostriatal region (PubMed:26451483). Mice also show defects in adaptive immunity: bone marrow cells display B-cells maturation defects, and bone marrow macrophages show impaired myelopoiesis and lipopolysaccharide (LPS)-inducible production of tumor necrosis factor (PubMed:14597717). Deletion leads to increased and chronic demyelination in mouse models of experimental autoimmune encephalitis (EAE) (PubMed:12707359).</text>
</comment>
<comment type="similarity">
    <text evidence="14">Belongs to the alpha/beta interferon family.</text>
</comment>
<evidence type="ECO:0000250" key="1">
    <source>
        <dbReference type="UniProtKB" id="P01574"/>
    </source>
</evidence>
<evidence type="ECO:0000250" key="2">
    <source>
        <dbReference type="UniProtKB" id="P70499"/>
    </source>
</evidence>
<evidence type="ECO:0000255" key="3"/>
<evidence type="ECO:0000269" key="4">
    <source>
    </source>
</evidence>
<evidence type="ECO:0000269" key="5">
    <source>
    </source>
</evidence>
<evidence type="ECO:0000269" key="6">
    <source>
    </source>
</evidence>
<evidence type="ECO:0000269" key="7">
    <source>
    </source>
</evidence>
<evidence type="ECO:0000269" key="8">
    <source>
    </source>
</evidence>
<evidence type="ECO:0000269" key="9">
    <source>
    </source>
</evidence>
<evidence type="ECO:0000269" key="10">
    <source>
    </source>
</evidence>
<evidence type="ECO:0000303" key="11">
    <source>
    </source>
</evidence>
<evidence type="ECO:0000303" key="12">
    <source>
    </source>
</evidence>
<evidence type="ECO:0000303" key="13">
    <source>
    </source>
</evidence>
<evidence type="ECO:0000305" key="14"/>
<evidence type="ECO:0000312" key="15">
    <source>
        <dbReference type="MGI" id="MGI:107657"/>
    </source>
</evidence>
<evidence type="ECO:0007829" key="16">
    <source>
        <dbReference type="PDB" id="1WU3"/>
    </source>
</evidence>
<keyword id="KW-0002">3D-structure</keyword>
<keyword id="KW-0051">Antiviral defense</keyword>
<keyword id="KW-0202">Cytokine</keyword>
<keyword id="KW-1015">Disulfide bond</keyword>
<keyword id="KW-0325">Glycoprotein</keyword>
<keyword id="KW-0597">Phosphoprotein</keyword>
<keyword id="KW-1185">Reference proteome</keyword>
<keyword id="KW-0964">Secreted</keyword>
<keyword id="KW-0732">Signal</keyword>
<proteinExistence type="evidence at protein level"/>
<reference key="1">
    <citation type="journal article" date="1983" name="J. Biol. Chem.">
        <title>Structure and expression of a cloned cDNA for mouse interferon-beta.</title>
        <authorList>
            <person name="Higashi Y."/>
            <person name="Sokawa Y."/>
            <person name="Watanabe Y."/>
            <person name="Kawade Y."/>
            <person name="Ohno S."/>
            <person name="Takaoka C."/>
            <person name="Taniguchi T."/>
        </authorList>
    </citation>
    <scope>NUCLEOTIDE SEQUENCE [MRNA]</scope>
</reference>
<reference key="2">
    <citation type="journal article" date="1989" name="Nucleic Acids Res.">
        <title>Nucleotide sequence of the mouse interferon-beta gene.</title>
        <authorList>
            <person name="Kuga T."/>
            <person name="Fujita T."/>
            <person name="Taniguchi T."/>
        </authorList>
    </citation>
    <scope>NUCLEOTIDE SEQUENCE [GENOMIC DNA]</scope>
</reference>
<reference key="3">
    <citation type="journal article" date="1988" name="J. Mol. Biol.">
        <title>Structure and characterization of a murine chromosomal fragment containing the interferon beta gene.</title>
        <authorList>
            <person name="Vodjdani G."/>
            <person name="Coulombel C."/>
            <person name="Doly J."/>
        </authorList>
    </citation>
    <scope>NUCLEOTIDE SEQUENCE [GENOMIC DNA]</scope>
</reference>
<reference key="4">
    <citation type="journal article" date="1988" name="Eur. J. Biochem.">
        <title>Purification and carbohydrate structure of natural murine interferon-beta.</title>
        <authorList>
            <person name="Civas A."/>
            <person name="Fournet B."/>
            <person name="Coulombel C."/>
            <person name="le Roscouet D."/>
            <person name="Honvault A."/>
            <person name="Petek F."/>
            <person name="Montreuil J."/>
            <person name="Doly J."/>
        </authorList>
    </citation>
    <scope>STRUCTURE OF CARBOHYDRATES</scope>
    <scope>GLYCOSYLATION AT ASN-50; ASN-90 AND ASN-97</scope>
</reference>
<reference key="5">
    <citation type="journal article" date="1990" name="Proc. Jpn. Acad., B, Phys. Biol. Sci.">
        <title>Three-dimensional structure of recombinant murine interferon-beta.</title>
        <authorList>
            <person name="Senda T."/>
            <person name="Matsuda S."/>
            <person name="Kurihara H."/>
            <person name="Nakamura K.T."/>
            <person name="Kawano G."/>
            <person name="Shimizu H."/>
            <person name="Mizuno H."/>
            <person name="Mitsui Y."/>
        </authorList>
    </citation>
    <scope>X-RAY CRYSTALLOGRAPHY (2.75 ANGSTROMS)</scope>
</reference>
<reference key="6">
    <citation type="journal article" date="1992" name="EMBO J.">
        <title>Three-dimensional crystal structure of recombinant murine interferon-beta.</title>
        <authorList>
            <person name="Senda T."/>
            <person name="Shimazu T."/>
            <person name="Matsuda S."/>
            <person name="Kawano G."/>
            <person name="Shimizu H."/>
            <person name="Nakamura K.T."/>
            <person name="Mitsui Y."/>
        </authorList>
    </citation>
    <scope>X-RAY CRYSTALLOGRAPHY (2.6 ANGSTROMS) OF 24-182</scope>
</reference>
<reference key="7">
    <citation type="journal article" date="2000" name="J. Virol.">
        <title>Impaired antiviral response and alpha/beta interferon induction in mice lacking beta interferon.</title>
        <authorList>
            <person name="Deonarain R."/>
            <person name="Alcami A."/>
            <person name="Alexiou M."/>
            <person name="Dallman M.J."/>
            <person name="Gewert D.R."/>
            <person name="Porter A.C."/>
        </authorList>
    </citation>
    <scope>FUNCTION</scope>
    <scope>DISRUPTION PHENOTYPE</scope>
</reference>
<reference key="8">
    <citation type="journal article" date="2003" name="J. Immunol.">
        <title>IFN-beta gene deletion leads to augmented and chronic demyelinating experimental autoimmune encephalomyelitis.</title>
        <authorList>
            <person name="Teige I."/>
            <person name="Treschow A."/>
            <person name="Teige A."/>
            <person name="Mattsson R."/>
            <person name="Navikas V."/>
            <person name="Leanderson T."/>
            <person name="Holmdahl R."/>
            <person name="Issazadeh-Navikas S."/>
        </authorList>
    </citation>
    <scope>DISRUPTION PHENOTYPE</scope>
</reference>
<reference key="9">
    <citation type="journal article" date="2003" name="Proc. Natl. Acad. Sci. U.S.A.">
        <title>Critical roles for IFN-beta in lymphoid development, myelopoiesis, and tumor development: links to tumor necrosis factor alpha.</title>
        <authorList>
            <person name="Deonarain R."/>
            <person name="Verma A."/>
            <person name="Porter A.C."/>
            <person name="Gewert D.R."/>
            <person name="Platanias L.C."/>
            <person name="Fish E.N."/>
        </authorList>
    </citation>
    <scope>FUNCTION</scope>
    <scope>DISRUPTION PHENOTYPE</scope>
</reference>
<reference key="10">
    <citation type="journal article" date="2015" name="Cell">
        <title>Lack of neuronal IFN-beta-IFNAR causes Lewy body- and Parkinson's disease-like dementia.</title>
        <authorList>
            <person name="Ejlerskov P."/>
            <person name="Hultberg J.G."/>
            <person name="Wang J."/>
            <person name="Carlsson R."/>
            <person name="Ambjoern M."/>
            <person name="Kuss M."/>
            <person name="Liu Y."/>
            <person name="Porcu G."/>
            <person name="Kolkova K."/>
            <person name="Friis Rundsten C."/>
            <person name="Ruscher K."/>
            <person name="Pakkenberg B."/>
            <person name="Goldmann T."/>
            <person name="Loreth D."/>
            <person name="Prinz M."/>
            <person name="Rubinsztein D.C."/>
            <person name="Issazadeh-Navikas S."/>
        </authorList>
    </citation>
    <scope>FUNCTION</scope>
    <scope>DISRUPTION PHENOTYPE</scope>
</reference>
<reference key="11">
    <citation type="journal article" date="1995" name="J. Mol. Biol.">
        <title>Refined crystal structure of recombinant murine interferon-beta at 2.15-A resolution.</title>
        <authorList>
            <person name="Senda T."/>
            <person name="Saitoh S."/>
            <person name="Mitsui Y."/>
        </authorList>
    </citation>
    <scope>X-RAY CRYSTALLOGRAPHY (2.15 ANGSTROMS) OF 22-182</scope>
</reference>
<reference key="12">
    <citation type="journal article" date="2013" name="Nat. Immunol.">
        <title>Structural basis of a unique interferon-beta signaling axis mediated via the receptor IFNAR1.</title>
        <authorList>
            <person name="de Weerd N.A."/>
            <person name="Vivian J.P."/>
            <person name="Nguyen T.K."/>
            <person name="Mangan N.E."/>
            <person name="Gould J.A."/>
            <person name="Braniff S.J."/>
            <person name="Zaker-Tabrizi L."/>
            <person name="Fung K.Y."/>
            <person name="Forster S.C."/>
            <person name="Beddoe T."/>
            <person name="Reid H.H."/>
            <person name="Rossjohn J."/>
            <person name="Hertzog P.J."/>
        </authorList>
    </citation>
    <scope>X-RAY CRYSTALLOGRAPHY (2.9 ANGSTROMS) OF 22-182 IN COMPLEX WITH IFNAR1</scope>
    <scope>FUNCTION</scope>
    <scope>SUBUNIT</scope>
</reference>
<dbReference type="EMBL" id="K00020">
    <property type="protein sequence ID" value="AAA37891.1"/>
    <property type="molecule type" value="mRNA"/>
</dbReference>
<dbReference type="EMBL" id="X14455">
    <property type="protein sequence ID" value="CAA32625.1"/>
    <property type="molecule type" value="Genomic_DNA"/>
</dbReference>
<dbReference type="EMBL" id="X14029">
    <property type="protein sequence ID" value="CAA32190.1"/>
    <property type="molecule type" value="Genomic_DNA"/>
</dbReference>
<dbReference type="CCDS" id="CCDS18318.1"/>
<dbReference type="PIR" id="S02020">
    <property type="entry name" value="IVMSB"/>
</dbReference>
<dbReference type="RefSeq" id="NP_034640.1">
    <property type="nucleotide sequence ID" value="NM_010510.2"/>
</dbReference>
<dbReference type="PDB" id="1IFA">
    <property type="method" value="X-ray"/>
    <property type="resolution" value="2.60 A"/>
    <property type="chains" value="A=24-181"/>
</dbReference>
<dbReference type="PDB" id="1WU3">
    <property type="method" value="X-ray"/>
    <property type="resolution" value="2.15 A"/>
    <property type="chains" value="I=22-182"/>
</dbReference>
<dbReference type="PDB" id="3WCY">
    <property type="method" value="X-ray"/>
    <property type="resolution" value="2.90 A"/>
    <property type="chains" value="I=22-182"/>
</dbReference>
<dbReference type="PDBsum" id="1IFA"/>
<dbReference type="PDBsum" id="1WU3"/>
<dbReference type="PDBsum" id="3WCY"/>
<dbReference type="SMR" id="P01575"/>
<dbReference type="FunCoup" id="P01575">
    <property type="interactions" value="1118"/>
</dbReference>
<dbReference type="STRING" id="10090.ENSMUSP00000056720"/>
<dbReference type="GlyConnect" id="292">
    <property type="glycosylation" value="9 N-Linked glycans"/>
</dbReference>
<dbReference type="GlyCosmos" id="P01575">
    <property type="glycosylation" value="3 sites, 16 glycans"/>
</dbReference>
<dbReference type="GlyGen" id="P01575">
    <property type="glycosylation" value="4 sites, 13 N-linked glycans (1 site)"/>
</dbReference>
<dbReference type="iPTMnet" id="P01575"/>
<dbReference type="PhosphoSitePlus" id="P01575"/>
<dbReference type="PaxDb" id="10090-ENSMUSP00000056720"/>
<dbReference type="Antibodypedia" id="3995">
    <property type="antibodies" value="1013 antibodies from 45 providers"/>
</dbReference>
<dbReference type="DNASU" id="15977"/>
<dbReference type="Ensembl" id="ENSMUST00000055671.5">
    <property type="protein sequence ID" value="ENSMUSP00000056720.4"/>
    <property type="gene ID" value="ENSMUSG00000048806.5"/>
</dbReference>
<dbReference type="GeneID" id="15977"/>
<dbReference type="KEGG" id="mmu:15977"/>
<dbReference type="UCSC" id="uc008tmz.1">
    <property type="organism name" value="mouse"/>
</dbReference>
<dbReference type="AGR" id="MGI:107657"/>
<dbReference type="CTD" id="3456"/>
<dbReference type="MGI" id="MGI:107657">
    <property type="gene designation" value="Ifnb1"/>
</dbReference>
<dbReference type="VEuPathDB" id="HostDB:ENSMUSG00000048806"/>
<dbReference type="eggNOG" id="ENOG502SQGR">
    <property type="taxonomic scope" value="Eukaryota"/>
</dbReference>
<dbReference type="GeneTree" id="ENSGT01000000214430"/>
<dbReference type="HOGENOM" id="CLU_109427_1_0_1"/>
<dbReference type="InParanoid" id="P01575"/>
<dbReference type="OMA" id="HWQKEHL"/>
<dbReference type="OrthoDB" id="8922121at2759"/>
<dbReference type="PhylomeDB" id="P01575"/>
<dbReference type="TreeFam" id="TF336177"/>
<dbReference type="Reactome" id="R-MMU-909733">
    <property type="pathway name" value="Interferon alpha/beta signaling"/>
</dbReference>
<dbReference type="Reactome" id="R-MMU-912694">
    <property type="pathway name" value="Regulation of IFNA/IFNB signaling"/>
</dbReference>
<dbReference type="BioGRID-ORCS" id="15977">
    <property type="hits" value="2 hits in 76 CRISPR screens"/>
</dbReference>
<dbReference type="EvolutionaryTrace" id="P01575"/>
<dbReference type="PRO" id="PR:P01575"/>
<dbReference type="Proteomes" id="UP000000589">
    <property type="component" value="Chromosome 4"/>
</dbReference>
<dbReference type="RNAct" id="P01575">
    <property type="molecule type" value="protein"/>
</dbReference>
<dbReference type="Bgee" id="ENSMUSG00000048806">
    <property type="expression patterns" value="Expressed in sternocleidomastoid and 10 other cell types or tissues"/>
</dbReference>
<dbReference type="ExpressionAtlas" id="P01575">
    <property type="expression patterns" value="baseline and differential"/>
</dbReference>
<dbReference type="GO" id="GO:0005576">
    <property type="term" value="C:extracellular region"/>
    <property type="evidence" value="ECO:0000304"/>
    <property type="project" value="Reactome"/>
</dbReference>
<dbReference type="GO" id="GO:0005615">
    <property type="term" value="C:extracellular space"/>
    <property type="evidence" value="ECO:0000314"/>
    <property type="project" value="MGI"/>
</dbReference>
<dbReference type="GO" id="GO:0005125">
    <property type="term" value="F:cytokine activity"/>
    <property type="evidence" value="ECO:0000314"/>
    <property type="project" value="MGI"/>
</dbReference>
<dbReference type="GO" id="GO:0005132">
    <property type="term" value="F:type I interferon receptor binding"/>
    <property type="evidence" value="ECO:0000353"/>
    <property type="project" value="UniProtKB"/>
</dbReference>
<dbReference type="GO" id="GO:0002250">
    <property type="term" value="P:adaptive immune response"/>
    <property type="evidence" value="ECO:0000314"/>
    <property type="project" value="MGI"/>
</dbReference>
<dbReference type="GO" id="GO:0042100">
    <property type="term" value="P:B cell proliferation"/>
    <property type="evidence" value="ECO:0000315"/>
    <property type="project" value="UniProtKB"/>
</dbReference>
<dbReference type="GO" id="GO:0071549">
    <property type="term" value="P:cellular response to dexamethasone stimulus"/>
    <property type="evidence" value="ECO:0000314"/>
    <property type="project" value="MGI"/>
</dbReference>
<dbReference type="GO" id="GO:0071359">
    <property type="term" value="P:cellular response to dsRNA"/>
    <property type="evidence" value="ECO:0000270"/>
    <property type="project" value="UniProtKB"/>
</dbReference>
<dbReference type="GO" id="GO:0098586">
    <property type="term" value="P:cellular response to virus"/>
    <property type="evidence" value="ECO:0000314"/>
    <property type="project" value="UniProtKB"/>
</dbReference>
<dbReference type="GO" id="GO:0042742">
    <property type="term" value="P:defense response to bacterium"/>
    <property type="evidence" value="ECO:0000314"/>
    <property type="project" value="MGI"/>
</dbReference>
<dbReference type="GO" id="GO:0051607">
    <property type="term" value="P:defense response to virus"/>
    <property type="evidence" value="ECO:0000314"/>
    <property type="project" value="UniProtKB"/>
</dbReference>
<dbReference type="GO" id="GO:0006959">
    <property type="term" value="P:humoral immune response"/>
    <property type="evidence" value="ECO:0000314"/>
    <property type="project" value="MGI"/>
</dbReference>
<dbReference type="GO" id="GO:0140123">
    <property type="term" value="P:negative regulation of Lewy body formation"/>
    <property type="evidence" value="ECO:0000315"/>
    <property type="project" value="UniProtKB"/>
</dbReference>
<dbReference type="GO" id="GO:0045671">
    <property type="term" value="P:negative regulation of osteoclast differentiation"/>
    <property type="evidence" value="ECO:0000314"/>
    <property type="project" value="MGI"/>
</dbReference>
<dbReference type="GO" id="GO:0070050">
    <property type="term" value="P:neuron cellular homeostasis"/>
    <property type="evidence" value="ECO:0000315"/>
    <property type="project" value="UniProtKB"/>
</dbReference>
<dbReference type="GO" id="GO:0010508">
    <property type="term" value="P:positive regulation of autophagy"/>
    <property type="evidence" value="ECO:0000315"/>
    <property type="project" value="UniProtKB"/>
</dbReference>
<dbReference type="GO" id="GO:0043330">
    <property type="term" value="P:response to exogenous dsRNA"/>
    <property type="evidence" value="ECO:0000266"/>
    <property type="project" value="MGI"/>
</dbReference>
<dbReference type="GO" id="GO:0060337">
    <property type="term" value="P:type I interferon-mediated signaling pathway"/>
    <property type="evidence" value="ECO:0000315"/>
    <property type="project" value="UniProtKB"/>
</dbReference>
<dbReference type="CDD" id="cd00095">
    <property type="entry name" value="IFab"/>
    <property type="match status" value="1"/>
</dbReference>
<dbReference type="FunFam" id="1.20.1250.10:FF:000026">
    <property type="entry name" value="Interferon beta"/>
    <property type="match status" value="1"/>
</dbReference>
<dbReference type="Gene3D" id="1.20.1250.10">
    <property type="match status" value="1"/>
</dbReference>
<dbReference type="InterPro" id="IPR009079">
    <property type="entry name" value="4_helix_cytokine-like_core"/>
</dbReference>
<dbReference type="InterPro" id="IPR000471">
    <property type="entry name" value="Interferon_alpha/beta/delta"/>
</dbReference>
<dbReference type="PANTHER" id="PTHR11691:SF73">
    <property type="entry name" value="INTERFERON BETA"/>
    <property type="match status" value="1"/>
</dbReference>
<dbReference type="PANTHER" id="PTHR11691">
    <property type="entry name" value="TYPE I INTERFERON"/>
    <property type="match status" value="1"/>
</dbReference>
<dbReference type="Pfam" id="PF00143">
    <property type="entry name" value="Interferon"/>
    <property type="match status" value="1"/>
</dbReference>
<dbReference type="PRINTS" id="PR00266">
    <property type="entry name" value="INTERFERONAB"/>
</dbReference>
<dbReference type="SMART" id="SM00076">
    <property type="entry name" value="IFabd"/>
    <property type="match status" value="1"/>
</dbReference>
<dbReference type="SUPFAM" id="SSF47266">
    <property type="entry name" value="4-helical cytokines"/>
    <property type="match status" value="1"/>
</dbReference>
<dbReference type="PROSITE" id="PS00252">
    <property type="entry name" value="INTERFERON_A_B_D"/>
    <property type="match status" value="1"/>
</dbReference>
<feature type="signal peptide" evidence="3">
    <location>
        <begin position="1"/>
        <end position="21"/>
    </location>
</feature>
<feature type="chain" id="PRO_0000016403" description="Interferon beta">
    <location>
        <begin position="22"/>
        <end position="182"/>
    </location>
</feature>
<feature type="modified residue" description="Phosphotyrosine" evidence="2">
    <location>
        <position position="24"/>
    </location>
</feature>
<feature type="glycosylation site" description="N-linked (GlcNAc...) asparagine" evidence="10">
    <location>
        <position position="50"/>
    </location>
</feature>
<feature type="glycosylation site" description="N-linked (GlcNAc...) asparagine" evidence="10">
    <location>
        <position position="90"/>
    </location>
</feature>
<feature type="glycosylation site" description="N-linked (GlcNAc...) asparagine" evidence="10">
    <location>
        <position position="97"/>
    </location>
</feature>
<feature type="helix" evidence="16">
    <location>
        <begin position="24"/>
        <end position="43"/>
    </location>
</feature>
<feature type="helix" evidence="16">
    <location>
        <begin position="61"/>
        <end position="64"/>
    </location>
</feature>
<feature type="helix" evidence="16">
    <location>
        <begin position="69"/>
        <end position="86"/>
    </location>
</feature>
<feature type="helix" evidence="16">
    <location>
        <begin position="92"/>
        <end position="94"/>
    </location>
</feature>
<feature type="helix" evidence="16">
    <location>
        <begin position="98"/>
        <end position="118"/>
    </location>
</feature>
<feature type="helix" evidence="16">
    <location>
        <begin position="119"/>
        <end position="122"/>
    </location>
</feature>
<feature type="helix" evidence="16">
    <location>
        <begin position="123"/>
        <end position="129"/>
    </location>
</feature>
<feature type="helix" evidence="16">
    <location>
        <begin position="133"/>
        <end position="151"/>
    </location>
</feature>
<feature type="turn" evidence="16">
    <location>
        <begin position="152"/>
        <end position="154"/>
    </location>
</feature>
<feature type="helix" evidence="16">
    <location>
        <begin position="156"/>
        <end position="176"/>
    </location>
</feature>
<feature type="helix" evidence="16">
    <location>
        <begin position="177"/>
        <end position="180"/>
    </location>
</feature>
<gene>
    <name evidence="15" type="primary">Ifnb1</name>
    <name type="synonym">Ifb</name>
    <name evidence="11" type="synonym">Ifnb</name>
</gene>
<organism>
    <name type="scientific">Mus musculus</name>
    <name type="common">Mouse</name>
    <dbReference type="NCBI Taxonomy" id="10090"/>
    <lineage>
        <taxon>Eukaryota</taxon>
        <taxon>Metazoa</taxon>
        <taxon>Chordata</taxon>
        <taxon>Craniata</taxon>
        <taxon>Vertebrata</taxon>
        <taxon>Euteleostomi</taxon>
        <taxon>Mammalia</taxon>
        <taxon>Eutheria</taxon>
        <taxon>Euarchontoglires</taxon>
        <taxon>Glires</taxon>
        <taxon>Rodentia</taxon>
        <taxon>Myomorpha</taxon>
        <taxon>Muroidea</taxon>
        <taxon>Muridae</taxon>
        <taxon>Murinae</taxon>
        <taxon>Mus</taxon>
        <taxon>Mus</taxon>
    </lineage>
</organism>
<sequence>MNNRWILHAAFLLCFSTTALSINYKQLQLQERTNIRKCQELLEQLNGKINLTYRADFKIPMEMTEKMQKSYTAFAIQEMLQNVFLVFRNNFSSTGWNETIVVRLLDELHQQTVFLKTVLEEKQEERLTWEMSSTALHLKSYYWRVQRYLKLMKYNSYAWMVVRAEIFRNFLIIRRLTRNFQN</sequence>